<sequence length="285" mass="30828">MVRIALPNKGRVYEPIMSLFEGAGLHVIEHSQRSLFAKTVDENITMLFARSRDIPGYVENGAADLGITGEDFIQEAGADVEVLLDLGMGKAELVLAVPEASAIERPEQLAGKKVATEFPEITKKYFATRGISVHVVEVCGATEITPHIGVADAIVDLTSTGTSLSMNRLKIIGRVLRTSQRLIASKASLAQDGRKISEITLALQSVIEARGKRYLMMNVPEGALEAVKKKLPGLAGPTVLKVEADSPMCAVHAVVPENEIYRVINDLKEVGARDILIVPIERIVR</sequence>
<evidence type="ECO:0000255" key="1">
    <source>
        <dbReference type="HAMAP-Rule" id="MF_00079"/>
    </source>
</evidence>
<dbReference type="EC" id="2.4.2.17" evidence="1"/>
<dbReference type="EMBL" id="AM114193">
    <property type="protein sequence ID" value="CAJ35990.1"/>
    <property type="molecule type" value="Genomic_DNA"/>
</dbReference>
<dbReference type="RefSeq" id="WP_012036515.1">
    <property type="nucleotide sequence ID" value="NC_009464.1"/>
</dbReference>
<dbReference type="SMR" id="Q0W6K3"/>
<dbReference type="STRING" id="351160.RCIX583"/>
<dbReference type="GeneID" id="5144288"/>
<dbReference type="KEGG" id="rci:RCIX583"/>
<dbReference type="PATRIC" id="fig|351160.9.peg.2245"/>
<dbReference type="eggNOG" id="arCOG02208">
    <property type="taxonomic scope" value="Archaea"/>
</dbReference>
<dbReference type="OrthoDB" id="33116at2157"/>
<dbReference type="UniPathway" id="UPA00031">
    <property type="reaction ID" value="UER00006"/>
</dbReference>
<dbReference type="Proteomes" id="UP000000663">
    <property type="component" value="Chromosome"/>
</dbReference>
<dbReference type="GO" id="GO:0005737">
    <property type="term" value="C:cytoplasm"/>
    <property type="evidence" value="ECO:0007669"/>
    <property type="project" value="UniProtKB-SubCell"/>
</dbReference>
<dbReference type="GO" id="GO:0005524">
    <property type="term" value="F:ATP binding"/>
    <property type="evidence" value="ECO:0007669"/>
    <property type="project" value="UniProtKB-KW"/>
</dbReference>
<dbReference type="GO" id="GO:0003879">
    <property type="term" value="F:ATP phosphoribosyltransferase activity"/>
    <property type="evidence" value="ECO:0007669"/>
    <property type="project" value="UniProtKB-UniRule"/>
</dbReference>
<dbReference type="GO" id="GO:0000287">
    <property type="term" value="F:magnesium ion binding"/>
    <property type="evidence" value="ECO:0007669"/>
    <property type="project" value="UniProtKB-UniRule"/>
</dbReference>
<dbReference type="GO" id="GO:0000105">
    <property type="term" value="P:L-histidine biosynthetic process"/>
    <property type="evidence" value="ECO:0007669"/>
    <property type="project" value="UniProtKB-UniRule"/>
</dbReference>
<dbReference type="CDD" id="cd13594">
    <property type="entry name" value="PBP2_HisGL4"/>
    <property type="match status" value="1"/>
</dbReference>
<dbReference type="FunFam" id="3.30.70.120:FF:000002">
    <property type="entry name" value="ATP phosphoribosyltransferase"/>
    <property type="match status" value="1"/>
</dbReference>
<dbReference type="Gene3D" id="3.30.70.120">
    <property type="match status" value="1"/>
</dbReference>
<dbReference type="Gene3D" id="3.40.190.10">
    <property type="entry name" value="Periplasmic binding protein-like II"/>
    <property type="match status" value="2"/>
</dbReference>
<dbReference type="HAMAP" id="MF_00079">
    <property type="entry name" value="HisG_Long"/>
    <property type="match status" value="1"/>
</dbReference>
<dbReference type="InterPro" id="IPR020621">
    <property type="entry name" value="ATP-PRT_HisG_long"/>
</dbReference>
<dbReference type="InterPro" id="IPR013820">
    <property type="entry name" value="ATP_PRibTrfase_cat"/>
</dbReference>
<dbReference type="InterPro" id="IPR001348">
    <property type="entry name" value="ATP_PRibTrfase_HisG"/>
</dbReference>
<dbReference type="InterPro" id="IPR013115">
    <property type="entry name" value="HisG_C"/>
</dbReference>
<dbReference type="InterPro" id="IPR011322">
    <property type="entry name" value="N-reg_PII-like_a/b"/>
</dbReference>
<dbReference type="InterPro" id="IPR015867">
    <property type="entry name" value="N-reg_PII/ATP_PRibTrfase_C"/>
</dbReference>
<dbReference type="NCBIfam" id="TIGR00070">
    <property type="entry name" value="hisG"/>
    <property type="match status" value="1"/>
</dbReference>
<dbReference type="NCBIfam" id="TIGR03455">
    <property type="entry name" value="HisG_C-term"/>
    <property type="match status" value="1"/>
</dbReference>
<dbReference type="PANTHER" id="PTHR21403:SF10">
    <property type="entry name" value="ATP PHOSPHORIBOSYLTRANSFERASE"/>
    <property type="match status" value="1"/>
</dbReference>
<dbReference type="PANTHER" id="PTHR21403">
    <property type="entry name" value="ATP PHOSPHORIBOSYLTRANSFERASE ATP-PRTASE"/>
    <property type="match status" value="1"/>
</dbReference>
<dbReference type="Pfam" id="PF01634">
    <property type="entry name" value="HisG"/>
    <property type="match status" value="1"/>
</dbReference>
<dbReference type="Pfam" id="PF08029">
    <property type="entry name" value="HisG_C"/>
    <property type="match status" value="1"/>
</dbReference>
<dbReference type="SUPFAM" id="SSF54913">
    <property type="entry name" value="GlnB-like"/>
    <property type="match status" value="1"/>
</dbReference>
<dbReference type="SUPFAM" id="SSF53850">
    <property type="entry name" value="Periplasmic binding protein-like II"/>
    <property type="match status" value="1"/>
</dbReference>
<organism>
    <name type="scientific">Methanocella arvoryzae (strain DSM 22066 / NBRC 105507 / MRE50)</name>
    <dbReference type="NCBI Taxonomy" id="351160"/>
    <lineage>
        <taxon>Archaea</taxon>
        <taxon>Methanobacteriati</taxon>
        <taxon>Methanobacteriota</taxon>
        <taxon>Stenosarchaea group</taxon>
        <taxon>Methanomicrobia</taxon>
        <taxon>Methanocellales</taxon>
        <taxon>Methanocellaceae</taxon>
        <taxon>Methanocella</taxon>
    </lineage>
</organism>
<reference key="1">
    <citation type="journal article" date="2006" name="Science">
        <title>Genome of rice cluster I archaea -- the key methane producers in the rice rhizosphere.</title>
        <authorList>
            <person name="Erkel C."/>
            <person name="Kube M."/>
            <person name="Reinhardt R."/>
            <person name="Liesack W."/>
        </authorList>
    </citation>
    <scope>NUCLEOTIDE SEQUENCE [LARGE SCALE GENOMIC DNA]</scope>
    <source>
        <strain>DSM 22066 / NBRC 105507 / MRE50</strain>
    </source>
</reference>
<feature type="chain" id="PRO_1000004511" description="ATP phosphoribosyltransferase">
    <location>
        <begin position="1"/>
        <end position="285"/>
    </location>
</feature>
<protein>
    <recommendedName>
        <fullName evidence="1">ATP phosphoribosyltransferase</fullName>
        <shortName evidence="1">ATP-PRT</shortName>
        <shortName evidence="1">ATP-PRTase</shortName>
        <ecNumber evidence="1">2.4.2.17</ecNumber>
    </recommendedName>
</protein>
<comment type="function">
    <text evidence="1">Catalyzes the condensation of ATP and 5-phosphoribose 1-diphosphate to form N'-(5'-phosphoribosyl)-ATP (PR-ATP). Has a crucial role in the pathway because the rate of histidine biosynthesis seems to be controlled primarily by regulation of HisG enzymatic activity.</text>
</comment>
<comment type="catalytic activity">
    <reaction evidence="1">
        <text>1-(5-phospho-beta-D-ribosyl)-ATP + diphosphate = 5-phospho-alpha-D-ribose 1-diphosphate + ATP</text>
        <dbReference type="Rhea" id="RHEA:18473"/>
        <dbReference type="ChEBI" id="CHEBI:30616"/>
        <dbReference type="ChEBI" id="CHEBI:33019"/>
        <dbReference type="ChEBI" id="CHEBI:58017"/>
        <dbReference type="ChEBI" id="CHEBI:73183"/>
        <dbReference type="EC" id="2.4.2.17"/>
    </reaction>
</comment>
<comment type="cofactor">
    <cofactor evidence="1">
        <name>Mg(2+)</name>
        <dbReference type="ChEBI" id="CHEBI:18420"/>
    </cofactor>
</comment>
<comment type="activity regulation">
    <text evidence="1">Feedback inhibited by histidine.</text>
</comment>
<comment type="pathway">
    <text evidence="1">Amino-acid biosynthesis; L-histidine biosynthesis; L-histidine from 5-phospho-alpha-D-ribose 1-diphosphate: step 1/9.</text>
</comment>
<comment type="subcellular location">
    <subcellularLocation>
        <location evidence="1">Cytoplasm</location>
    </subcellularLocation>
</comment>
<comment type="similarity">
    <text evidence="1">Belongs to the ATP phosphoribosyltransferase family. Long subfamily.</text>
</comment>
<gene>
    <name evidence="1" type="primary">hisG</name>
    <name type="ordered locus">UNCMA_21950</name>
    <name type="ORF">RCIX583</name>
</gene>
<accession>Q0W6K3</accession>
<keyword id="KW-0028">Amino-acid biosynthesis</keyword>
<keyword id="KW-0067">ATP-binding</keyword>
<keyword id="KW-0963">Cytoplasm</keyword>
<keyword id="KW-0328">Glycosyltransferase</keyword>
<keyword id="KW-0368">Histidine biosynthesis</keyword>
<keyword id="KW-0460">Magnesium</keyword>
<keyword id="KW-0479">Metal-binding</keyword>
<keyword id="KW-0547">Nucleotide-binding</keyword>
<keyword id="KW-1185">Reference proteome</keyword>
<keyword id="KW-0808">Transferase</keyword>
<name>HIS1_METAR</name>
<proteinExistence type="inferred from homology"/>